<accession>Q6L3B8</accession>
<sequence length="137" mass="14867">MGAFPSPPPWGWSTGFITTPLTTGRLPSQHLDPALPKLFWFTPTLPTCPTVAKQFWDTKRTSPDGNLKVANLPSFAISFATAPAALANCPPLPRVISMLCMAVPKGISVEVDSSFLSKNPFPNCTSFFQSIRLSRCI</sequence>
<proteinExistence type="inferred from homology"/>
<organism>
    <name type="scientific">Saccharum hybrid</name>
    <name type="common">Sugarcane</name>
    <dbReference type="NCBI Taxonomy" id="15819"/>
    <lineage>
        <taxon>Eukaryota</taxon>
        <taxon>Viridiplantae</taxon>
        <taxon>Streptophyta</taxon>
        <taxon>Embryophyta</taxon>
        <taxon>Tracheophyta</taxon>
        <taxon>Spermatophyta</taxon>
        <taxon>Magnoliopsida</taxon>
        <taxon>Liliopsida</taxon>
        <taxon>Poales</taxon>
        <taxon>Poaceae</taxon>
        <taxon>PACMAD clade</taxon>
        <taxon>Panicoideae</taxon>
        <taxon>Andropogonodae</taxon>
        <taxon>Andropogoneae</taxon>
        <taxon>Saccharinae</taxon>
        <taxon>Saccharum</taxon>
    </lineage>
</organism>
<keyword id="KW-0150">Chloroplast</keyword>
<keyword id="KW-0934">Plastid</keyword>
<protein>
    <recommendedName>
        <fullName>Uncharacterized protein ycf72</fullName>
    </recommendedName>
    <alternativeName>
        <fullName>ORF137</fullName>
    </alternativeName>
</protein>
<comment type="subcellular location">
    <subcellularLocation>
        <location>Plastid</location>
        <location>Chloroplast</location>
    </subcellularLocation>
</comment>
<comment type="similarity">
    <text evidence="1">Belongs to the ycf72 family.</text>
</comment>
<reference key="1">
    <citation type="journal article" date="2004" name="Curr. Genet.">
        <title>Structural features and transcript-editing analysis of sugarcane (Saccharum officinarum L.) chloroplast genome.</title>
        <authorList>
            <person name="Calsa T. Jr."/>
            <person name="Carraro D.M."/>
            <person name="Benatti M.R."/>
            <person name="Barbosa A.C."/>
            <person name="Kitajima J.P."/>
            <person name="Carrer H."/>
        </authorList>
    </citation>
    <scope>NUCLEOTIDE SEQUENCE [LARGE SCALE GENOMIC DNA]</scope>
    <source>
        <strain>cv. SP-80-3280</strain>
    </source>
</reference>
<name>YCF72_SACHY</name>
<gene>
    <name type="primary">ycf72-1</name>
    <name type="ordered locus">PS009</name>
</gene>
<gene>
    <name type="primary">ycf72-2</name>
    <name type="ordered locus">PS078</name>
</gene>
<feature type="chain" id="PRO_0000226936" description="Uncharacterized protein ycf72">
    <location>
        <begin position="1"/>
        <end position="137"/>
    </location>
</feature>
<geneLocation type="chloroplast"/>
<evidence type="ECO:0000305" key="1"/>
<dbReference type="EMBL" id="AE009947">
    <property type="protein sequence ID" value="AAT44674.1"/>
    <property type="molecule type" value="Genomic_DNA"/>
</dbReference>
<dbReference type="EMBL" id="AE009947">
    <property type="protein sequence ID" value="AAT44637.1"/>
    <property type="molecule type" value="Genomic_DNA"/>
</dbReference>
<dbReference type="GO" id="GO:0009507">
    <property type="term" value="C:chloroplast"/>
    <property type="evidence" value="ECO:0007669"/>
    <property type="project" value="UniProtKB-SubCell"/>
</dbReference>
<dbReference type="InterPro" id="IPR038860">
    <property type="entry name" value="YCF72"/>
</dbReference>
<dbReference type="PANTHER" id="PTHR37377">
    <property type="entry name" value="RIBULOSE BISPHOSPHATE CARBOXYLASE LARGE CHAIN"/>
    <property type="match status" value="1"/>
</dbReference>
<dbReference type="PANTHER" id="PTHR37377:SF2">
    <property type="entry name" value="SMALL RIBOSOMAL SUBUNIT PROTEIN US2C"/>
    <property type="match status" value="1"/>
</dbReference>